<gene>
    <name type="primary">AIM5</name>
    <name type="synonym">FMP51</name>
    <name type="ordered locus">ZYRO0B09108g</name>
</gene>
<comment type="function">
    <text evidence="1">Component of the MICOS complex, a large protein complex of the mitochondrial inner membrane that plays crucial roles in the maintenance of crista junctions, inner membrane architecture, and formation of contact sites to the outer membrane.</text>
</comment>
<comment type="subunit">
    <text evidence="1">Component of the mitochondrial contact site and cristae organizing system (MICOS) complex.</text>
</comment>
<comment type="subcellular location">
    <subcellularLocation>
        <location evidence="1">Mitochondrion inner membrane</location>
        <topology evidence="1">Single-pass membrane protein</topology>
    </subcellularLocation>
</comment>
<comment type="similarity">
    <text evidence="3">Belongs to the MICOS complex subunit Mic12 family.</text>
</comment>
<accession>C5DRK2</accession>
<accession>Q9UVE5</accession>
<organism>
    <name type="scientific">Zygosaccharomyces rouxii (strain ATCC 2623 / CBS 732 / NBRC 1130 / NCYC 568 / NRRL Y-229)</name>
    <dbReference type="NCBI Taxonomy" id="559307"/>
    <lineage>
        <taxon>Eukaryota</taxon>
        <taxon>Fungi</taxon>
        <taxon>Dikarya</taxon>
        <taxon>Ascomycota</taxon>
        <taxon>Saccharomycotina</taxon>
        <taxon>Saccharomycetes</taxon>
        <taxon>Saccharomycetales</taxon>
        <taxon>Saccharomycetaceae</taxon>
        <taxon>Zygosaccharomyces</taxon>
    </lineage>
</organism>
<name>MIC12_ZYGRC</name>
<evidence type="ECO:0000250" key="1"/>
<evidence type="ECO:0000255" key="2"/>
<evidence type="ECO:0000305" key="3"/>
<dbReference type="EMBL" id="Y18560">
    <property type="protein sequence ID" value="CAB62287.1"/>
    <property type="molecule type" value="Genomic_DNA"/>
</dbReference>
<dbReference type="EMBL" id="CU928174">
    <property type="protein sequence ID" value="CAR26413.1"/>
    <property type="molecule type" value="Genomic_DNA"/>
</dbReference>
<dbReference type="RefSeq" id="XP_002495346.1">
    <property type="nucleotide sequence ID" value="XM_002495301.1"/>
</dbReference>
<dbReference type="FunCoup" id="C5DRK2">
    <property type="interactions" value="56"/>
</dbReference>
<dbReference type="STRING" id="559307.C5DRK2"/>
<dbReference type="GeneID" id="8202498"/>
<dbReference type="KEGG" id="zro:ZYRO0B09108g"/>
<dbReference type="HOGENOM" id="CLU_164154_0_0_1"/>
<dbReference type="InParanoid" id="C5DRK2"/>
<dbReference type="Proteomes" id="UP000008536">
    <property type="component" value="Chromosome B"/>
</dbReference>
<dbReference type="GO" id="GO:0061617">
    <property type="term" value="C:MICOS complex"/>
    <property type="evidence" value="ECO:0007669"/>
    <property type="project" value="InterPro"/>
</dbReference>
<dbReference type="GO" id="GO:0044284">
    <property type="term" value="C:mitochondrial crista junction"/>
    <property type="evidence" value="ECO:0007669"/>
    <property type="project" value="InterPro"/>
</dbReference>
<dbReference type="GO" id="GO:0042407">
    <property type="term" value="P:cristae formation"/>
    <property type="evidence" value="ECO:0007669"/>
    <property type="project" value="InterPro"/>
</dbReference>
<dbReference type="InterPro" id="IPR031463">
    <property type="entry name" value="Mic12"/>
</dbReference>
<dbReference type="Pfam" id="PF17050">
    <property type="entry name" value="AIM5"/>
    <property type="match status" value="1"/>
</dbReference>
<sequence length="97" mass="11188">MSKLIKLTSITAVSSTLAASYYFYFVDRDGFHYQNSQWKKIGDKVQGIIDGSENINPSTPSNSNQVIVVKRPMTETMKDLWNEQIRNTANWFYSWGK</sequence>
<protein>
    <recommendedName>
        <fullName>MICOS complex subunit MIC12</fullName>
    </recommendedName>
    <alternativeName>
        <fullName>Altered inheritance of mitochondria protein 5, mitochondrial</fullName>
    </alternativeName>
    <alternativeName>
        <fullName>Found in mitochondrial proteome protein 51</fullName>
    </alternativeName>
</protein>
<feature type="chain" id="PRO_0000399897" description="MICOS complex subunit MIC12">
    <location>
        <begin position="1"/>
        <end position="97"/>
    </location>
</feature>
<feature type="transmembrane region" description="Helical" evidence="2">
    <location>
        <begin position="7"/>
        <end position="24"/>
    </location>
</feature>
<reference key="1">
    <citation type="journal article" date="2000" name="Yeast">
        <title>Sequence and organization analyses of a Zygosaccharomyces rouxii DNA fragment containing the HIS3 gene.</title>
        <authorList>
            <person name="Sychrova H."/>
            <person name="Braun V."/>
            <person name="Souciet J.-L."/>
        </authorList>
    </citation>
    <scope>NUCLEOTIDE SEQUENCE [GENOMIC DNA]</scope>
</reference>
<reference key="2">
    <citation type="journal article" date="2009" name="Genome Res.">
        <title>Comparative genomics of protoploid Saccharomycetaceae.</title>
        <authorList>
            <consortium name="The Genolevures Consortium"/>
            <person name="Souciet J.-L."/>
            <person name="Dujon B."/>
            <person name="Gaillardin C."/>
            <person name="Johnston M."/>
            <person name="Baret P.V."/>
            <person name="Cliften P."/>
            <person name="Sherman D.J."/>
            <person name="Weissenbach J."/>
            <person name="Westhof E."/>
            <person name="Wincker P."/>
            <person name="Jubin C."/>
            <person name="Poulain J."/>
            <person name="Barbe V."/>
            <person name="Segurens B."/>
            <person name="Artiguenave F."/>
            <person name="Anthouard V."/>
            <person name="Vacherie B."/>
            <person name="Val M.-E."/>
            <person name="Fulton R.S."/>
            <person name="Minx P."/>
            <person name="Wilson R."/>
            <person name="Durrens P."/>
            <person name="Jean G."/>
            <person name="Marck C."/>
            <person name="Martin T."/>
            <person name="Nikolski M."/>
            <person name="Rolland T."/>
            <person name="Seret M.-L."/>
            <person name="Casaregola S."/>
            <person name="Despons L."/>
            <person name="Fairhead C."/>
            <person name="Fischer G."/>
            <person name="Lafontaine I."/>
            <person name="Leh V."/>
            <person name="Lemaire M."/>
            <person name="de Montigny J."/>
            <person name="Neuveglise C."/>
            <person name="Thierry A."/>
            <person name="Blanc-Lenfle I."/>
            <person name="Bleykasten C."/>
            <person name="Diffels J."/>
            <person name="Fritsch E."/>
            <person name="Frangeul L."/>
            <person name="Goeffon A."/>
            <person name="Jauniaux N."/>
            <person name="Kachouri-Lafond R."/>
            <person name="Payen C."/>
            <person name="Potier S."/>
            <person name="Pribylova L."/>
            <person name="Ozanne C."/>
            <person name="Richard G.-F."/>
            <person name="Sacerdot C."/>
            <person name="Straub M.-L."/>
            <person name="Talla E."/>
        </authorList>
    </citation>
    <scope>NUCLEOTIDE SEQUENCE [LARGE SCALE GENOMIC DNA]</scope>
    <source>
        <strain>ATCC 2623 / CBS 732 / BCRC 21506 / NBRC 1130 / NCYC 568 / NRRL Y-229</strain>
    </source>
</reference>
<keyword id="KW-0472">Membrane</keyword>
<keyword id="KW-0496">Mitochondrion</keyword>
<keyword id="KW-0999">Mitochondrion inner membrane</keyword>
<keyword id="KW-1185">Reference proteome</keyword>
<keyword id="KW-0812">Transmembrane</keyword>
<keyword id="KW-1133">Transmembrane helix</keyword>
<proteinExistence type="inferred from homology"/>